<proteinExistence type="inferred from homology"/>
<gene>
    <name evidence="1" type="primary">serC</name>
    <name type="ordered locus">Shew185_2286</name>
</gene>
<name>SERC_SHEB8</name>
<protein>
    <recommendedName>
        <fullName evidence="1">Phosphoserine aminotransferase</fullName>
        <ecNumber evidence="1">2.6.1.52</ecNumber>
    </recommendedName>
    <alternativeName>
        <fullName evidence="1">Phosphohydroxythreonine aminotransferase</fullName>
        <shortName evidence="1">PSAT</shortName>
    </alternativeName>
</protein>
<organism>
    <name type="scientific">Shewanella baltica (strain OS185)</name>
    <dbReference type="NCBI Taxonomy" id="402882"/>
    <lineage>
        <taxon>Bacteria</taxon>
        <taxon>Pseudomonadati</taxon>
        <taxon>Pseudomonadota</taxon>
        <taxon>Gammaproteobacteria</taxon>
        <taxon>Alteromonadales</taxon>
        <taxon>Shewanellaceae</taxon>
        <taxon>Shewanella</taxon>
    </lineage>
</organism>
<reference key="1">
    <citation type="submission" date="2007-07" db="EMBL/GenBank/DDBJ databases">
        <title>Complete sequence of chromosome of Shewanella baltica OS185.</title>
        <authorList>
            <consortium name="US DOE Joint Genome Institute"/>
            <person name="Copeland A."/>
            <person name="Lucas S."/>
            <person name="Lapidus A."/>
            <person name="Barry K."/>
            <person name="Glavina del Rio T."/>
            <person name="Dalin E."/>
            <person name="Tice H."/>
            <person name="Pitluck S."/>
            <person name="Sims D."/>
            <person name="Brettin T."/>
            <person name="Bruce D."/>
            <person name="Detter J.C."/>
            <person name="Han C."/>
            <person name="Schmutz J."/>
            <person name="Larimer F."/>
            <person name="Land M."/>
            <person name="Hauser L."/>
            <person name="Kyrpides N."/>
            <person name="Mikhailova N."/>
            <person name="Brettar I."/>
            <person name="Rodrigues J."/>
            <person name="Konstantinidis K."/>
            <person name="Tiedje J."/>
            <person name="Richardson P."/>
        </authorList>
    </citation>
    <scope>NUCLEOTIDE SEQUENCE [LARGE SCALE GENOMIC DNA]</scope>
    <source>
        <strain>OS185</strain>
    </source>
</reference>
<keyword id="KW-0028">Amino-acid biosynthesis</keyword>
<keyword id="KW-0032">Aminotransferase</keyword>
<keyword id="KW-0963">Cytoplasm</keyword>
<keyword id="KW-0663">Pyridoxal phosphate</keyword>
<keyword id="KW-0664">Pyridoxine biosynthesis</keyword>
<keyword id="KW-0718">Serine biosynthesis</keyword>
<keyword id="KW-0808">Transferase</keyword>
<feature type="chain" id="PRO_1000203564" description="Phosphoserine aminotransferase">
    <location>
        <begin position="1"/>
        <end position="363"/>
    </location>
</feature>
<feature type="binding site" evidence="1">
    <location>
        <position position="42"/>
    </location>
    <ligand>
        <name>L-glutamate</name>
        <dbReference type="ChEBI" id="CHEBI:29985"/>
    </ligand>
</feature>
<feature type="binding site" evidence="1">
    <location>
        <begin position="76"/>
        <end position="77"/>
    </location>
    <ligand>
        <name>pyridoxal 5'-phosphate</name>
        <dbReference type="ChEBI" id="CHEBI:597326"/>
    </ligand>
</feature>
<feature type="binding site" evidence="1">
    <location>
        <position position="102"/>
    </location>
    <ligand>
        <name>pyridoxal 5'-phosphate</name>
        <dbReference type="ChEBI" id="CHEBI:597326"/>
    </ligand>
</feature>
<feature type="binding site" evidence="1">
    <location>
        <position position="156"/>
    </location>
    <ligand>
        <name>pyridoxal 5'-phosphate</name>
        <dbReference type="ChEBI" id="CHEBI:597326"/>
    </ligand>
</feature>
<feature type="binding site" evidence="1">
    <location>
        <position position="175"/>
    </location>
    <ligand>
        <name>pyridoxal 5'-phosphate</name>
        <dbReference type="ChEBI" id="CHEBI:597326"/>
    </ligand>
</feature>
<feature type="binding site" evidence="1">
    <location>
        <position position="198"/>
    </location>
    <ligand>
        <name>pyridoxal 5'-phosphate</name>
        <dbReference type="ChEBI" id="CHEBI:597326"/>
    </ligand>
</feature>
<feature type="binding site" evidence="1">
    <location>
        <begin position="240"/>
        <end position="241"/>
    </location>
    <ligand>
        <name>pyridoxal 5'-phosphate</name>
        <dbReference type="ChEBI" id="CHEBI:597326"/>
    </ligand>
</feature>
<feature type="modified residue" description="N6-(pyridoxal phosphate)lysine" evidence="1">
    <location>
        <position position="199"/>
    </location>
</feature>
<evidence type="ECO:0000255" key="1">
    <source>
        <dbReference type="HAMAP-Rule" id="MF_00160"/>
    </source>
</evidence>
<comment type="function">
    <text evidence="1">Catalyzes the reversible conversion of 3-phosphohydroxypyruvate to phosphoserine and of 3-hydroxy-2-oxo-4-phosphonooxybutanoate to phosphohydroxythreonine.</text>
</comment>
<comment type="catalytic activity">
    <reaction evidence="1">
        <text>O-phospho-L-serine + 2-oxoglutarate = 3-phosphooxypyruvate + L-glutamate</text>
        <dbReference type="Rhea" id="RHEA:14329"/>
        <dbReference type="ChEBI" id="CHEBI:16810"/>
        <dbReference type="ChEBI" id="CHEBI:18110"/>
        <dbReference type="ChEBI" id="CHEBI:29985"/>
        <dbReference type="ChEBI" id="CHEBI:57524"/>
        <dbReference type="EC" id="2.6.1.52"/>
    </reaction>
</comment>
<comment type="catalytic activity">
    <reaction evidence="1">
        <text>4-(phosphooxy)-L-threonine + 2-oxoglutarate = (R)-3-hydroxy-2-oxo-4-phosphooxybutanoate + L-glutamate</text>
        <dbReference type="Rhea" id="RHEA:16573"/>
        <dbReference type="ChEBI" id="CHEBI:16810"/>
        <dbReference type="ChEBI" id="CHEBI:29985"/>
        <dbReference type="ChEBI" id="CHEBI:58452"/>
        <dbReference type="ChEBI" id="CHEBI:58538"/>
        <dbReference type="EC" id="2.6.1.52"/>
    </reaction>
</comment>
<comment type="cofactor">
    <cofactor evidence="1">
        <name>pyridoxal 5'-phosphate</name>
        <dbReference type="ChEBI" id="CHEBI:597326"/>
    </cofactor>
    <text evidence="1">Binds 1 pyridoxal phosphate per subunit.</text>
</comment>
<comment type="pathway">
    <text evidence="1">Amino-acid biosynthesis; L-serine biosynthesis; L-serine from 3-phospho-D-glycerate: step 2/3.</text>
</comment>
<comment type="pathway">
    <text evidence="1">Cofactor biosynthesis; pyridoxine 5'-phosphate biosynthesis; pyridoxine 5'-phosphate from D-erythrose 4-phosphate: step 3/5.</text>
</comment>
<comment type="subunit">
    <text evidence="1">Homodimer.</text>
</comment>
<comment type="subcellular location">
    <subcellularLocation>
        <location evidence="1">Cytoplasm</location>
    </subcellularLocation>
</comment>
<comment type="similarity">
    <text evidence="1">Belongs to the class-V pyridoxal-phosphate-dependent aminotransferase family. SerC subfamily.</text>
</comment>
<accession>A6WNN5</accession>
<sequence>MSAIYNFCAGPAMLPAAVMKKAQQELLDWNGQGVSVMEISHRSKEFIALTQQAESDLRELMQIPTNYHVLFMHGGGRGQFSAVVNNFLGNHGRALYLVSGQWSSAALAEAQKLVGEAQIDSLNIVEKHNGLNAVVLPDLHKIDADYRYVHYCPNETVDGIEIFDELDSPWPIVADLSSTIMSREIDVSRYGLIYAGAQKNIGPSGLSIVIVRDDMLKLPSLPQSSIMDYRLAVEHDSMFNTPPTFAWYLAAEVFAWLKSTGGISSIAKINQQKAQMLYQCIDGNAFYRNGVVAANRSQMNVTFQLVNEALDGEFLKQAQIAGLVALKGHRIVGGMRASLYNAMPLDGIVALVKFMNEFAAKHS</sequence>
<dbReference type="EC" id="2.6.1.52" evidence="1"/>
<dbReference type="EMBL" id="CP000753">
    <property type="protein sequence ID" value="ABS08424.1"/>
    <property type="molecule type" value="Genomic_DNA"/>
</dbReference>
<dbReference type="RefSeq" id="WP_012089286.1">
    <property type="nucleotide sequence ID" value="NC_009665.1"/>
</dbReference>
<dbReference type="SMR" id="A6WNN5"/>
<dbReference type="KEGG" id="sbm:Shew185_2286"/>
<dbReference type="HOGENOM" id="CLU_034866_0_2_6"/>
<dbReference type="UniPathway" id="UPA00135">
    <property type="reaction ID" value="UER00197"/>
</dbReference>
<dbReference type="UniPathway" id="UPA00244">
    <property type="reaction ID" value="UER00311"/>
</dbReference>
<dbReference type="GO" id="GO:0005737">
    <property type="term" value="C:cytoplasm"/>
    <property type="evidence" value="ECO:0007669"/>
    <property type="project" value="UniProtKB-SubCell"/>
</dbReference>
<dbReference type="GO" id="GO:0004648">
    <property type="term" value="F:O-phospho-L-serine:2-oxoglutarate aminotransferase activity"/>
    <property type="evidence" value="ECO:0007669"/>
    <property type="project" value="UniProtKB-UniRule"/>
</dbReference>
<dbReference type="GO" id="GO:0030170">
    <property type="term" value="F:pyridoxal phosphate binding"/>
    <property type="evidence" value="ECO:0007669"/>
    <property type="project" value="UniProtKB-UniRule"/>
</dbReference>
<dbReference type="GO" id="GO:0006564">
    <property type="term" value="P:L-serine biosynthetic process"/>
    <property type="evidence" value="ECO:0007669"/>
    <property type="project" value="UniProtKB-UniRule"/>
</dbReference>
<dbReference type="GO" id="GO:0008615">
    <property type="term" value="P:pyridoxine biosynthetic process"/>
    <property type="evidence" value="ECO:0007669"/>
    <property type="project" value="UniProtKB-UniRule"/>
</dbReference>
<dbReference type="FunFam" id="3.40.640.10:FF:000010">
    <property type="entry name" value="Phosphoserine aminotransferase"/>
    <property type="match status" value="1"/>
</dbReference>
<dbReference type="FunFam" id="3.90.1150.10:FF:000006">
    <property type="entry name" value="Phosphoserine aminotransferase"/>
    <property type="match status" value="1"/>
</dbReference>
<dbReference type="Gene3D" id="3.90.1150.10">
    <property type="entry name" value="Aspartate Aminotransferase, domain 1"/>
    <property type="match status" value="1"/>
</dbReference>
<dbReference type="Gene3D" id="3.40.640.10">
    <property type="entry name" value="Type I PLP-dependent aspartate aminotransferase-like (Major domain)"/>
    <property type="match status" value="1"/>
</dbReference>
<dbReference type="HAMAP" id="MF_00160">
    <property type="entry name" value="SerC_aminotrans_5"/>
    <property type="match status" value="1"/>
</dbReference>
<dbReference type="InterPro" id="IPR000192">
    <property type="entry name" value="Aminotrans_V_dom"/>
</dbReference>
<dbReference type="InterPro" id="IPR020578">
    <property type="entry name" value="Aminotrans_V_PyrdxlP_BS"/>
</dbReference>
<dbReference type="InterPro" id="IPR022278">
    <property type="entry name" value="Pser_aminoTfrase"/>
</dbReference>
<dbReference type="InterPro" id="IPR015424">
    <property type="entry name" value="PyrdxlP-dep_Trfase"/>
</dbReference>
<dbReference type="InterPro" id="IPR015421">
    <property type="entry name" value="PyrdxlP-dep_Trfase_major"/>
</dbReference>
<dbReference type="InterPro" id="IPR015422">
    <property type="entry name" value="PyrdxlP-dep_Trfase_small"/>
</dbReference>
<dbReference type="NCBIfam" id="NF003764">
    <property type="entry name" value="PRK05355.1"/>
    <property type="match status" value="1"/>
</dbReference>
<dbReference type="NCBIfam" id="TIGR01364">
    <property type="entry name" value="serC_1"/>
    <property type="match status" value="1"/>
</dbReference>
<dbReference type="PANTHER" id="PTHR43247">
    <property type="entry name" value="PHOSPHOSERINE AMINOTRANSFERASE"/>
    <property type="match status" value="1"/>
</dbReference>
<dbReference type="PANTHER" id="PTHR43247:SF1">
    <property type="entry name" value="PHOSPHOSERINE AMINOTRANSFERASE"/>
    <property type="match status" value="1"/>
</dbReference>
<dbReference type="Pfam" id="PF00266">
    <property type="entry name" value="Aminotran_5"/>
    <property type="match status" value="1"/>
</dbReference>
<dbReference type="PIRSF" id="PIRSF000525">
    <property type="entry name" value="SerC"/>
    <property type="match status" value="1"/>
</dbReference>
<dbReference type="SUPFAM" id="SSF53383">
    <property type="entry name" value="PLP-dependent transferases"/>
    <property type="match status" value="1"/>
</dbReference>
<dbReference type="PROSITE" id="PS00595">
    <property type="entry name" value="AA_TRANSFER_CLASS_5"/>
    <property type="match status" value="1"/>
</dbReference>